<protein>
    <recommendedName>
        <fullName>Protein TOPLESS</fullName>
    </recommendedName>
    <alternativeName>
        <fullName>WUS-interacting protein 1</fullName>
    </alternativeName>
</protein>
<dbReference type="EMBL" id="AC034256">
    <property type="protein sequence ID" value="AAF82145.1"/>
    <property type="status" value="ALT_SEQ"/>
    <property type="molecule type" value="Genomic_DNA"/>
</dbReference>
<dbReference type="EMBL" id="CP002684">
    <property type="protein sequence ID" value="AEE29356.1"/>
    <property type="molecule type" value="Genomic_DNA"/>
</dbReference>
<dbReference type="EMBL" id="CP002684">
    <property type="protein sequence ID" value="AEE29357.1"/>
    <property type="molecule type" value="Genomic_DNA"/>
</dbReference>
<dbReference type="EMBL" id="CP002684">
    <property type="protein sequence ID" value="AEE29358.1"/>
    <property type="molecule type" value="Genomic_DNA"/>
</dbReference>
<dbReference type="EMBL" id="CP002684">
    <property type="protein sequence ID" value="AEE29359.1"/>
    <property type="molecule type" value="Genomic_DNA"/>
</dbReference>
<dbReference type="EMBL" id="AY046013">
    <property type="protein sequence ID" value="AAK76687.1"/>
    <property type="molecule type" value="mRNA"/>
</dbReference>
<dbReference type="EMBL" id="AY142619">
    <property type="protein sequence ID" value="AAN13188.1"/>
    <property type="molecule type" value="mRNA"/>
</dbReference>
<dbReference type="PIR" id="G86291">
    <property type="entry name" value="G86291"/>
</dbReference>
<dbReference type="RefSeq" id="NP_001031050.1">
    <property type="nucleotide sequence ID" value="NM_001035973.3"/>
</dbReference>
<dbReference type="RefSeq" id="NP_001031051.1">
    <property type="nucleotide sequence ID" value="NM_001035974.4"/>
</dbReference>
<dbReference type="RefSeq" id="NP_563981.1">
    <property type="nucleotide sequence ID" value="NM_101443.4"/>
</dbReference>
<dbReference type="RefSeq" id="NP_849672.1">
    <property type="nucleotide sequence ID" value="NM_179341.3"/>
</dbReference>
<dbReference type="PDB" id="5NQS">
    <property type="method" value="X-ray"/>
    <property type="resolution" value="2.61 A"/>
    <property type="chains" value="A/B=3-184"/>
</dbReference>
<dbReference type="PDB" id="5NQV">
    <property type="method" value="X-ray"/>
    <property type="resolution" value="1.95 A"/>
    <property type="chains" value="A/B/C/D=3-184"/>
</dbReference>
<dbReference type="PDBsum" id="5NQS"/>
<dbReference type="PDBsum" id="5NQV"/>
<dbReference type="SMR" id="Q94AI7"/>
<dbReference type="BioGRID" id="23384">
    <property type="interactions" value="168"/>
</dbReference>
<dbReference type="DIP" id="DIP-52391N"/>
<dbReference type="FunCoup" id="Q94AI7">
    <property type="interactions" value="1866"/>
</dbReference>
<dbReference type="IntAct" id="Q94AI7">
    <property type="interactions" value="38"/>
</dbReference>
<dbReference type="STRING" id="3702.Q94AI7"/>
<dbReference type="GlyGen" id="Q94AI7">
    <property type="glycosylation" value="2 sites, 1 O-linked glycan (2 sites)"/>
</dbReference>
<dbReference type="iPTMnet" id="Q94AI7"/>
<dbReference type="PaxDb" id="3702-AT1G15750.3"/>
<dbReference type="ProteomicsDB" id="234622"/>
<dbReference type="EnsemblPlants" id="AT1G15750.1">
    <property type="protein sequence ID" value="AT1G15750.1"/>
    <property type="gene ID" value="AT1G15750"/>
</dbReference>
<dbReference type="EnsemblPlants" id="AT1G15750.2">
    <property type="protein sequence ID" value="AT1G15750.2"/>
    <property type="gene ID" value="AT1G15750"/>
</dbReference>
<dbReference type="EnsemblPlants" id="AT1G15750.3">
    <property type="protein sequence ID" value="AT1G15750.3"/>
    <property type="gene ID" value="AT1G15750"/>
</dbReference>
<dbReference type="EnsemblPlants" id="AT1G15750.4">
    <property type="protein sequence ID" value="AT1G15750.4"/>
    <property type="gene ID" value="AT1G15750"/>
</dbReference>
<dbReference type="GeneID" id="838144"/>
<dbReference type="Gramene" id="AT1G15750.1">
    <property type="protein sequence ID" value="AT1G15750.1"/>
    <property type="gene ID" value="AT1G15750"/>
</dbReference>
<dbReference type="Gramene" id="AT1G15750.2">
    <property type="protein sequence ID" value="AT1G15750.2"/>
    <property type="gene ID" value="AT1G15750"/>
</dbReference>
<dbReference type="Gramene" id="AT1G15750.3">
    <property type="protein sequence ID" value="AT1G15750.3"/>
    <property type="gene ID" value="AT1G15750"/>
</dbReference>
<dbReference type="Gramene" id="AT1G15750.4">
    <property type="protein sequence ID" value="AT1G15750.4"/>
    <property type="gene ID" value="AT1G15750"/>
</dbReference>
<dbReference type="KEGG" id="ath:AT1G15750"/>
<dbReference type="Araport" id="AT1G15750"/>
<dbReference type="TAIR" id="AT1G15750">
    <property type="gene designation" value="TPL"/>
</dbReference>
<dbReference type="eggNOG" id="KOG0266">
    <property type="taxonomic scope" value="Eukaryota"/>
</dbReference>
<dbReference type="HOGENOM" id="CLU_003103_1_0_1"/>
<dbReference type="InParanoid" id="Q94AI7"/>
<dbReference type="OMA" id="IKIMANS"/>
<dbReference type="PhylomeDB" id="Q94AI7"/>
<dbReference type="PRO" id="PR:Q94AI7"/>
<dbReference type="Proteomes" id="UP000006548">
    <property type="component" value="Chromosome 1"/>
</dbReference>
<dbReference type="ExpressionAtlas" id="Q94AI7">
    <property type="expression patterns" value="baseline and differential"/>
</dbReference>
<dbReference type="GO" id="GO:0005634">
    <property type="term" value="C:nucleus"/>
    <property type="evidence" value="ECO:0000314"/>
    <property type="project" value="TAIR"/>
</dbReference>
<dbReference type="GO" id="GO:0042802">
    <property type="term" value="F:identical protein binding"/>
    <property type="evidence" value="ECO:0000353"/>
    <property type="project" value="IntAct"/>
</dbReference>
<dbReference type="GO" id="GO:0042803">
    <property type="term" value="F:protein homodimerization activity"/>
    <property type="evidence" value="ECO:0000353"/>
    <property type="project" value="TAIR"/>
</dbReference>
<dbReference type="GO" id="GO:0009867">
    <property type="term" value="P:jasmonic acid mediated signaling pathway"/>
    <property type="evidence" value="ECO:0000315"/>
    <property type="project" value="TAIR"/>
</dbReference>
<dbReference type="GO" id="GO:0045892">
    <property type="term" value="P:negative regulation of DNA-templated transcription"/>
    <property type="evidence" value="ECO:0000314"/>
    <property type="project" value="TAIR"/>
</dbReference>
<dbReference type="GO" id="GO:0010072">
    <property type="term" value="P:primary shoot apical meristem specification"/>
    <property type="evidence" value="ECO:0000315"/>
    <property type="project" value="TAIR"/>
</dbReference>
<dbReference type="GO" id="GO:0009733">
    <property type="term" value="P:response to auxin"/>
    <property type="evidence" value="ECO:0000353"/>
    <property type="project" value="TAIR"/>
</dbReference>
<dbReference type="GO" id="GO:0010051">
    <property type="term" value="P:xylem and phloem pattern formation"/>
    <property type="evidence" value="ECO:0000316"/>
    <property type="project" value="TAIR"/>
</dbReference>
<dbReference type="FunFam" id="2.130.10.10:FF:000558">
    <property type="entry name" value="Topless-related protein 1"/>
    <property type="match status" value="1"/>
</dbReference>
<dbReference type="FunFam" id="2.130.10.10:FF:001237">
    <property type="entry name" value="Topless-related protein 2"/>
    <property type="match status" value="1"/>
</dbReference>
<dbReference type="FunFam" id="2.130.10.10:FF:000479">
    <property type="entry name" value="Topless-related protein 3"/>
    <property type="match status" value="1"/>
</dbReference>
<dbReference type="Gene3D" id="2.130.10.10">
    <property type="entry name" value="YVTN repeat-like/Quinoprotein amine dehydrogenase"/>
    <property type="match status" value="3"/>
</dbReference>
<dbReference type="InterPro" id="IPR006595">
    <property type="entry name" value="CTLH_C"/>
</dbReference>
<dbReference type="InterPro" id="IPR006594">
    <property type="entry name" value="LisH"/>
</dbReference>
<dbReference type="InterPro" id="IPR027728">
    <property type="entry name" value="Topless_fam"/>
</dbReference>
<dbReference type="InterPro" id="IPR048419">
    <property type="entry name" value="Topless_Znf"/>
</dbReference>
<dbReference type="InterPro" id="IPR054532">
    <property type="entry name" value="TPL_SMU1_LisH-like"/>
</dbReference>
<dbReference type="InterPro" id="IPR054080">
    <property type="entry name" value="TPR1-like_2nd"/>
</dbReference>
<dbReference type="InterPro" id="IPR015943">
    <property type="entry name" value="WD40/YVTN_repeat-like_dom_sf"/>
</dbReference>
<dbReference type="InterPro" id="IPR019775">
    <property type="entry name" value="WD40_repeat_CS"/>
</dbReference>
<dbReference type="InterPro" id="IPR036322">
    <property type="entry name" value="WD40_repeat_dom_sf"/>
</dbReference>
<dbReference type="InterPro" id="IPR001680">
    <property type="entry name" value="WD40_rpt"/>
</dbReference>
<dbReference type="PANTHER" id="PTHR44083:SF27">
    <property type="entry name" value="PROTEIN TOPLESS"/>
    <property type="match status" value="1"/>
</dbReference>
<dbReference type="PANTHER" id="PTHR44083">
    <property type="entry name" value="TOPLESS-RELATED PROTEIN 1-RELATED"/>
    <property type="match status" value="1"/>
</dbReference>
<dbReference type="Pfam" id="PF17814">
    <property type="entry name" value="LisH_TPL"/>
    <property type="match status" value="1"/>
</dbReference>
<dbReference type="Pfam" id="PF21889">
    <property type="entry name" value="TPR1-like_2nd"/>
    <property type="match status" value="1"/>
</dbReference>
<dbReference type="Pfam" id="PF00400">
    <property type="entry name" value="WD40"/>
    <property type="match status" value="3"/>
</dbReference>
<dbReference type="Pfam" id="PF21359">
    <property type="entry name" value="zf_topless"/>
    <property type="match status" value="1"/>
</dbReference>
<dbReference type="SMART" id="SM00668">
    <property type="entry name" value="CTLH"/>
    <property type="match status" value="1"/>
</dbReference>
<dbReference type="SMART" id="SM00667">
    <property type="entry name" value="LisH"/>
    <property type="match status" value="1"/>
</dbReference>
<dbReference type="SMART" id="SM00320">
    <property type="entry name" value="WD40"/>
    <property type="match status" value="11"/>
</dbReference>
<dbReference type="SUPFAM" id="SSF50978">
    <property type="entry name" value="WD40 repeat-like"/>
    <property type="match status" value="3"/>
</dbReference>
<dbReference type="PROSITE" id="PS50897">
    <property type="entry name" value="CTLH"/>
    <property type="match status" value="1"/>
</dbReference>
<dbReference type="PROSITE" id="PS50896">
    <property type="entry name" value="LISH"/>
    <property type="match status" value="1"/>
</dbReference>
<dbReference type="PROSITE" id="PS00678">
    <property type="entry name" value="WD_REPEATS_1"/>
    <property type="match status" value="2"/>
</dbReference>
<dbReference type="PROSITE" id="PS50082">
    <property type="entry name" value="WD_REPEATS_2"/>
    <property type="match status" value="3"/>
</dbReference>
<dbReference type="PROSITE" id="PS50294">
    <property type="entry name" value="WD_REPEATS_REGION"/>
    <property type="match status" value="2"/>
</dbReference>
<name>TPL_ARATH</name>
<keyword id="KW-0002">3D-structure</keyword>
<keyword id="KW-0217">Developmental protein</keyword>
<keyword id="KW-1184">Jasmonic acid signaling pathway</keyword>
<keyword id="KW-0539">Nucleus</keyword>
<keyword id="KW-0597">Phosphoprotein</keyword>
<keyword id="KW-1185">Reference proteome</keyword>
<keyword id="KW-0677">Repeat</keyword>
<keyword id="KW-0678">Repressor</keyword>
<keyword id="KW-0804">Transcription</keyword>
<keyword id="KW-0805">Transcription regulation</keyword>
<keyword id="KW-0853">WD repeat</keyword>
<evidence type="ECO:0000255" key="1">
    <source>
        <dbReference type="PROSITE-ProRule" id="PRU00058"/>
    </source>
</evidence>
<evidence type="ECO:0000255" key="2">
    <source>
        <dbReference type="PROSITE-ProRule" id="PRU00126"/>
    </source>
</evidence>
<evidence type="ECO:0000256" key="3">
    <source>
        <dbReference type="SAM" id="MobiDB-lite"/>
    </source>
</evidence>
<evidence type="ECO:0000269" key="4">
    <source>
    </source>
</evidence>
<evidence type="ECO:0000269" key="5">
    <source>
    </source>
</evidence>
<evidence type="ECO:0000269" key="6">
    <source>
    </source>
</evidence>
<evidence type="ECO:0000269" key="7">
    <source>
    </source>
</evidence>
<evidence type="ECO:0000269" key="8">
    <source>
    </source>
</evidence>
<evidence type="ECO:0000269" key="9">
    <source>
    </source>
</evidence>
<evidence type="ECO:0000269" key="10">
    <source>
    </source>
</evidence>
<evidence type="ECO:0000269" key="11">
    <source>
    </source>
</evidence>
<evidence type="ECO:0000269" key="12">
    <source>
    </source>
</evidence>
<evidence type="ECO:0000269" key="13">
    <source>
    </source>
</evidence>
<evidence type="ECO:0000269" key="14">
    <source>
    </source>
</evidence>
<evidence type="ECO:0000269" key="15">
    <source>
    </source>
</evidence>
<evidence type="ECO:0000269" key="16">
    <source>
    </source>
</evidence>
<evidence type="ECO:0000269" key="17">
    <source>
    </source>
</evidence>
<evidence type="ECO:0000269" key="18">
    <source>
    </source>
</evidence>
<evidence type="ECO:0000269" key="19">
    <source>
    </source>
</evidence>
<evidence type="ECO:0000269" key="20">
    <source>
    </source>
</evidence>
<evidence type="ECO:0000305" key="21"/>
<evidence type="ECO:0007744" key="22">
    <source>
    </source>
</evidence>
<evidence type="ECO:0007744" key="23">
    <source>
    </source>
</evidence>
<evidence type="ECO:0007744" key="24">
    <source>
    </source>
</evidence>
<evidence type="ECO:0007829" key="25">
    <source>
        <dbReference type="PDB" id="5NQV"/>
    </source>
</evidence>
<organism>
    <name type="scientific">Arabidopsis thaliana</name>
    <name type="common">Mouse-ear cress</name>
    <dbReference type="NCBI Taxonomy" id="3702"/>
    <lineage>
        <taxon>Eukaryota</taxon>
        <taxon>Viridiplantae</taxon>
        <taxon>Streptophyta</taxon>
        <taxon>Embryophyta</taxon>
        <taxon>Tracheophyta</taxon>
        <taxon>Spermatophyta</taxon>
        <taxon>Magnoliopsida</taxon>
        <taxon>eudicotyledons</taxon>
        <taxon>Gunneridae</taxon>
        <taxon>Pentapetalae</taxon>
        <taxon>rosids</taxon>
        <taxon>malvids</taxon>
        <taxon>Brassicales</taxon>
        <taxon>Brassicaceae</taxon>
        <taxon>Camelineae</taxon>
        <taxon>Arabidopsis</taxon>
    </lineage>
</organism>
<proteinExistence type="evidence at protein level"/>
<reference key="1">
    <citation type="journal article" date="2000" name="Nature">
        <title>Sequence and analysis of chromosome 1 of the plant Arabidopsis thaliana.</title>
        <authorList>
            <person name="Theologis A."/>
            <person name="Ecker J.R."/>
            <person name="Palm C.J."/>
            <person name="Federspiel N.A."/>
            <person name="Kaul S."/>
            <person name="White O."/>
            <person name="Alonso J."/>
            <person name="Altafi H."/>
            <person name="Araujo R."/>
            <person name="Bowman C.L."/>
            <person name="Brooks S.Y."/>
            <person name="Buehler E."/>
            <person name="Chan A."/>
            <person name="Chao Q."/>
            <person name="Chen H."/>
            <person name="Cheuk R.F."/>
            <person name="Chin C.W."/>
            <person name="Chung M.K."/>
            <person name="Conn L."/>
            <person name="Conway A.B."/>
            <person name="Conway A.R."/>
            <person name="Creasy T.H."/>
            <person name="Dewar K."/>
            <person name="Dunn P."/>
            <person name="Etgu P."/>
            <person name="Feldblyum T.V."/>
            <person name="Feng J.-D."/>
            <person name="Fong B."/>
            <person name="Fujii C.Y."/>
            <person name="Gill J.E."/>
            <person name="Goldsmith A.D."/>
            <person name="Haas B."/>
            <person name="Hansen N.F."/>
            <person name="Hughes B."/>
            <person name="Huizar L."/>
            <person name="Hunter J.L."/>
            <person name="Jenkins J."/>
            <person name="Johnson-Hopson C."/>
            <person name="Khan S."/>
            <person name="Khaykin E."/>
            <person name="Kim C.J."/>
            <person name="Koo H.L."/>
            <person name="Kremenetskaia I."/>
            <person name="Kurtz D.B."/>
            <person name="Kwan A."/>
            <person name="Lam B."/>
            <person name="Langin-Hooper S."/>
            <person name="Lee A."/>
            <person name="Lee J.M."/>
            <person name="Lenz C.A."/>
            <person name="Li J.H."/>
            <person name="Li Y.-P."/>
            <person name="Lin X."/>
            <person name="Liu S.X."/>
            <person name="Liu Z.A."/>
            <person name="Luros J.S."/>
            <person name="Maiti R."/>
            <person name="Marziali A."/>
            <person name="Militscher J."/>
            <person name="Miranda M."/>
            <person name="Nguyen M."/>
            <person name="Nierman W.C."/>
            <person name="Osborne B.I."/>
            <person name="Pai G."/>
            <person name="Peterson J."/>
            <person name="Pham P.K."/>
            <person name="Rizzo M."/>
            <person name="Rooney T."/>
            <person name="Rowley D."/>
            <person name="Sakano H."/>
            <person name="Salzberg S.L."/>
            <person name="Schwartz J.R."/>
            <person name="Shinn P."/>
            <person name="Southwick A.M."/>
            <person name="Sun H."/>
            <person name="Tallon L.J."/>
            <person name="Tambunga G."/>
            <person name="Toriumi M.J."/>
            <person name="Town C.D."/>
            <person name="Utterback T."/>
            <person name="Van Aken S."/>
            <person name="Vaysberg M."/>
            <person name="Vysotskaia V.S."/>
            <person name="Walker M."/>
            <person name="Wu D."/>
            <person name="Yu G."/>
            <person name="Fraser C.M."/>
            <person name="Venter J.C."/>
            <person name="Davis R.W."/>
        </authorList>
    </citation>
    <scope>NUCLEOTIDE SEQUENCE [LARGE SCALE GENOMIC DNA]</scope>
    <source>
        <strain>cv. Columbia</strain>
    </source>
</reference>
<reference key="2">
    <citation type="journal article" date="2017" name="Plant J.">
        <title>Araport11: a complete reannotation of the Arabidopsis thaliana reference genome.</title>
        <authorList>
            <person name="Cheng C.Y."/>
            <person name="Krishnakumar V."/>
            <person name="Chan A.P."/>
            <person name="Thibaud-Nissen F."/>
            <person name="Schobel S."/>
            <person name="Town C.D."/>
        </authorList>
    </citation>
    <scope>GENOME REANNOTATION</scope>
    <source>
        <strain>cv. Columbia</strain>
    </source>
</reference>
<reference key="3">
    <citation type="journal article" date="2003" name="Science">
        <title>Empirical analysis of transcriptional activity in the Arabidopsis genome.</title>
        <authorList>
            <person name="Yamada K."/>
            <person name="Lim J."/>
            <person name="Dale J.M."/>
            <person name="Chen H."/>
            <person name="Shinn P."/>
            <person name="Palm C.J."/>
            <person name="Southwick A.M."/>
            <person name="Wu H.C."/>
            <person name="Kim C.J."/>
            <person name="Nguyen M."/>
            <person name="Pham P.K."/>
            <person name="Cheuk R.F."/>
            <person name="Karlin-Newmann G."/>
            <person name="Liu S.X."/>
            <person name="Lam B."/>
            <person name="Sakano H."/>
            <person name="Wu T."/>
            <person name="Yu G."/>
            <person name="Miranda M."/>
            <person name="Quach H.L."/>
            <person name="Tripp M."/>
            <person name="Chang C.H."/>
            <person name="Lee J.M."/>
            <person name="Toriumi M.J."/>
            <person name="Chan M.M."/>
            <person name="Tang C.C."/>
            <person name="Onodera C.S."/>
            <person name="Deng J.M."/>
            <person name="Akiyama K."/>
            <person name="Ansari Y."/>
            <person name="Arakawa T."/>
            <person name="Banh J."/>
            <person name="Banno F."/>
            <person name="Bowser L."/>
            <person name="Brooks S.Y."/>
            <person name="Carninci P."/>
            <person name="Chao Q."/>
            <person name="Choy N."/>
            <person name="Enju A."/>
            <person name="Goldsmith A.D."/>
            <person name="Gurjal M."/>
            <person name="Hansen N.F."/>
            <person name="Hayashizaki Y."/>
            <person name="Johnson-Hopson C."/>
            <person name="Hsuan V.W."/>
            <person name="Iida K."/>
            <person name="Karnes M."/>
            <person name="Khan S."/>
            <person name="Koesema E."/>
            <person name="Ishida J."/>
            <person name="Jiang P.X."/>
            <person name="Jones T."/>
            <person name="Kawai J."/>
            <person name="Kamiya A."/>
            <person name="Meyers C."/>
            <person name="Nakajima M."/>
            <person name="Narusaka M."/>
            <person name="Seki M."/>
            <person name="Sakurai T."/>
            <person name="Satou M."/>
            <person name="Tamse R."/>
            <person name="Vaysberg M."/>
            <person name="Wallender E.K."/>
            <person name="Wong C."/>
            <person name="Yamamura Y."/>
            <person name="Yuan S."/>
            <person name="Shinozaki K."/>
            <person name="Davis R.W."/>
            <person name="Theologis A."/>
            <person name="Ecker J.R."/>
        </authorList>
    </citation>
    <scope>NUCLEOTIDE SEQUENCE [LARGE SCALE MRNA]</scope>
    <source>
        <strain>cv. Columbia</strain>
    </source>
</reference>
<reference key="4">
    <citation type="journal article" date="2006" name="Plant Cell">
        <title>Analysis of the transcription factor WUSCHEL and its functional homologue in Antirrhinum reveals a potential mechanism for their roles in meristem maintenance.</title>
        <authorList>
            <person name="Kieffer M."/>
            <person name="Stern Y."/>
            <person name="Cook H."/>
            <person name="Clerici E."/>
            <person name="Maulbetsch C."/>
            <person name="Laux T."/>
            <person name="Davies B."/>
        </authorList>
    </citation>
    <scope>INTERACTION WITH WUS</scope>
    <scope>TISSUE SPECIFICITY</scope>
</reference>
<reference key="5">
    <citation type="journal article" date="2006" name="Science">
        <title>TOPLESS regulates apical embryonic fate in Arabidopsis.</title>
        <authorList>
            <person name="Long J.A."/>
            <person name="Ohno C."/>
            <person name="Smith Z.R."/>
            <person name="Meyerowitz E.M."/>
        </authorList>
    </citation>
    <scope>FUNCTION</scope>
    <scope>MUTAGENESIS OF LYS-92 AND ASN-176</scope>
    <scope>TISSUE SPECIFICITY</scope>
    <scope>DEVELOPMENTAL STAGE</scope>
    <scope>SUBCELLULAR LOCATION</scope>
    <scope>DISRUPTION PHENOTYPE</scope>
    <scope>GENE FAMILY</scope>
    <scope>NOMENCLATURE</scope>
</reference>
<reference key="6">
    <citation type="journal article" date="2008" name="J. Proteome Res.">
        <title>Site-specific phosphorylation profiling of Arabidopsis proteins by mass spectrometry and peptide chip analysis.</title>
        <authorList>
            <person name="de la Fuente van Bentem S."/>
            <person name="Anrather D."/>
            <person name="Dohnal I."/>
            <person name="Roitinger E."/>
            <person name="Csaszar E."/>
            <person name="Joore J."/>
            <person name="Buijnink J."/>
            <person name="Carreri A."/>
            <person name="Forzani C."/>
            <person name="Lorkovic Z.J."/>
            <person name="Barta A."/>
            <person name="Lecourieux D."/>
            <person name="Verhounig A."/>
            <person name="Jonak C."/>
            <person name="Hirt H."/>
        </authorList>
    </citation>
    <scope>PHOSPHORYLATION [LARGE SCALE ANALYSIS] AT SER-214</scope>
    <scope>IDENTIFICATION BY MASS SPECTROMETRY [LARGE SCALE ANALYSIS]</scope>
    <source>
        <tissue>Root</tissue>
    </source>
</reference>
<reference key="7">
    <citation type="journal article" date="2008" name="Science">
        <title>TOPLESS mediates auxin-dependent transcriptional repression during Arabidopsis embryogenesis.</title>
        <authorList>
            <person name="Szemenyei H."/>
            <person name="Hannon M."/>
            <person name="Long J.A."/>
        </authorList>
    </citation>
    <scope>FUNCTION</scope>
    <scope>SUBCELLULAR LOCATION</scope>
    <scope>SUBUNIT</scope>
    <scope>INTERACTION WITH IAA1; IAA2; IAA3; IAA4; IAA6; IAA8; IAA9; IAA11; IAA12; IAA13; IAA14; IAA17; IAA18; IAA26; IAA27 AND IAA28</scope>
</reference>
<reference key="8">
    <citation type="journal article" date="2009" name="J. Proteomics">
        <title>Phosphoproteomic analysis of nuclei-enriched fractions from Arabidopsis thaliana.</title>
        <authorList>
            <person name="Jones A.M.E."/>
            <person name="MacLean D."/>
            <person name="Studholme D.J."/>
            <person name="Serna-Sanz A."/>
            <person name="Andreasson E."/>
            <person name="Rathjen J.P."/>
            <person name="Peck S.C."/>
        </authorList>
    </citation>
    <scope>PHOSPHORYLATION [LARGE SCALE ANALYSIS] AT SER-214</scope>
    <scope>IDENTIFICATION BY MASS SPECTROMETRY [LARGE SCALE ANALYSIS]</scope>
    <source>
        <strain>cv. Columbia</strain>
    </source>
</reference>
<reference key="9">
    <citation type="journal article" date="2009" name="Plant Physiol.">
        <title>Large-scale Arabidopsis phosphoproteome profiling reveals novel chloroplast kinase substrates and phosphorylation networks.</title>
        <authorList>
            <person name="Reiland S."/>
            <person name="Messerli G."/>
            <person name="Baerenfaller K."/>
            <person name="Gerrits B."/>
            <person name="Endler A."/>
            <person name="Grossmann J."/>
            <person name="Gruissem W."/>
            <person name="Baginsky S."/>
        </authorList>
    </citation>
    <scope>PHOSPHORYLATION [LARGE SCALE ANALYSIS] AT SER-214</scope>
    <scope>IDENTIFICATION BY MASS SPECTROMETRY [LARGE SCALE ANALYSIS]</scope>
</reference>
<reference key="10">
    <citation type="journal article" date="2010" name="Nature">
        <title>Control of Arabidopsis apical-basal embryo polarity by antagonistic transcription factors.</title>
        <authorList>
            <person name="Smith Z.R."/>
            <person name="Long J.A."/>
        </authorList>
    </citation>
    <scope>FUNCTION</scope>
</reference>
<reference key="11">
    <citation type="journal article" date="2010" name="Nature">
        <title>NINJA connects the co-repressor TOPLESS to jasmonate signalling.</title>
        <authorList>
            <person name="Pauwels L."/>
            <person name="Barbero G.F."/>
            <person name="Geerinck J."/>
            <person name="Tilleman S."/>
            <person name="Grunewald W."/>
            <person name="Perez A.C."/>
            <person name="Chico J.M."/>
            <person name="Bossche R.V."/>
            <person name="Sewell J."/>
            <person name="Gil E."/>
            <person name="Garcia-Casado G."/>
            <person name="Witters E."/>
            <person name="Inze D."/>
            <person name="Long J.A."/>
            <person name="De Jaeger G."/>
            <person name="Solano R."/>
            <person name="Goossens A."/>
        </authorList>
    </citation>
    <scope>FUNCTION</scope>
    <scope>INTERACTION WITH AFPH2</scope>
</reference>
<reference key="12">
    <citation type="journal article" date="2012" name="Development">
        <title>APETALA2 negatively regulates multiple floral organ identity genes in Arabidopsis by recruiting the co-repressor TOPLESS and the histone deacetylase HDA19.</title>
        <authorList>
            <person name="Krogan N.T."/>
            <person name="Hogan K."/>
            <person name="Long J.A."/>
        </authorList>
    </citation>
    <scope>FUNCTION</scope>
    <scope>INTERACTION WITH AP2 AND HAD19</scope>
    <scope>MUTAGENESIS OF ASN-176</scope>
</reference>
<reference key="13">
    <citation type="journal article" date="2012" name="Plant Cell">
        <title>JAZ8 lacks a canonical degron and has an EAR motif that mediates transcriptional repression of jasmonate responses in Arabidopsis.</title>
        <authorList>
            <person name="Shyu C."/>
            <person name="Figueroa P."/>
            <person name="Depew C.L."/>
            <person name="Cooke T.F."/>
            <person name="Sheard L.B."/>
            <person name="Moreno J.E."/>
            <person name="Katsir L."/>
            <person name="Zheng N."/>
            <person name="Browse J."/>
            <person name="Howe G.A."/>
        </authorList>
    </citation>
    <scope>INTERACTION WITH TIFY5A/JAZ8</scope>
</reference>
<reference key="14">
    <citation type="journal article" date="2013" name="Plant Cell">
        <title>The TIE1 transcriptional repressor links TCP transcription factors with TOPLESS/TOPLESS-RELATED corepressors and modulates leaf development in Arabidopsis.</title>
        <authorList>
            <person name="Tao Q."/>
            <person name="Guo D."/>
            <person name="Wei B."/>
            <person name="Zhang F."/>
            <person name="Pang C."/>
            <person name="Jiang H."/>
            <person name="Zhang J."/>
            <person name="Wei T."/>
            <person name="Gu H."/>
            <person name="Qu L.J."/>
            <person name="Qin G."/>
        </authorList>
    </citation>
    <scope>INTERACTION WITH SPEAR3/TIE1</scope>
    <scope>TISSUE SPECIFICITY</scope>
</reference>
<reference key="15">
    <citation type="journal article" date="2014" name="J. Genet. Genomics">
        <title>SPOROCYTELESS is a novel embryophyte-specific transcription repressor that interacts with TPL and TCP proteins in Arabidopsis.</title>
        <authorList>
            <person name="Chen G.H."/>
            <person name="Sun J.Y."/>
            <person name="Liu M."/>
            <person name="Liu J."/>
            <person name="Yang W.C."/>
        </authorList>
    </citation>
    <scope>INTERACTION WITH SPL</scope>
</reference>
<reference key="16">
    <citation type="journal article" date="2014" name="Plant Cell">
        <title>An EAR-dependent regulatory module promotes male germ cell division and sperm fertility in Arabidopsis.</title>
        <authorList>
            <person name="Borg M."/>
            <person name="Rutley N."/>
            <person name="Kagale S."/>
            <person name="Hamamura Y."/>
            <person name="Gherghinoiu M."/>
            <person name="Kumar S."/>
            <person name="Sari U."/>
            <person name="Esparza-Franco M.A."/>
            <person name="Sakamoto W."/>
            <person name="Rozwadowski K."/>
            <person name="Higashiyama T."/>
            <person name="Twell D."/>
        </authorList>
    </citation>
    <scope>INTERACTION WITH ZAT2 AND ZAT3</scope>
</reference>
<reference key="17">
    <citation type="journal article" date="2014" name="PLoS ONE">
        <title>The non-JAZ TIFY protein TIFY8 from Arabidopsis thaliana is a transcriptional repressor.</title>
        <authorList>
            <person name="Cuellar Perez A."/>
            <person name="Nagels Durand A."/>
            <person name="Vanden Bossche R."/>
            <person name="De Clercq R."/>
            <person name="Persiau G."/>
            <person name="Van Wees S.C."/>
            <person name="Pieterse C.M."/>
            <person name="Gevaert K."/>
            <person name="De Jaeger G."/>
            <person name="Goossens A."/>
            <person name="Pauwels L."/>
        </authorList>
    </citation>
    <scope>INTERACTION WITH AFPH2</scope>
</reference>
<reference key="18">
    <citation type="journal article" date="2015" name="Cell Res.">
        <title>The molecular mechanism of sporocyteless/nozzle in controlling Arabidopsis ovule development.</title>
        <authorList>
            <person name="Wei B."/>
            <person name="Zhang J."/>
            <person name="Pang C."/>
            <person name="Yu H."/>
            <person name="Guo D."/>
            <person name="Jiang H."/>
            <person name="Ding M."/>
            <person name="Chen Z."/>
            <person name="Tao Q."/>
            <person name="Gu H."/>
            <person name="Qu L.J."/>
            <person name="Qin G."/>
        </authorList>
    </citation>
    <scope>FUNCTION</scope>
    <scope>INTERACTION WITH SPL</scope>
    <scope>TISSUE SPECIFICITY</scope>
    <scope>DEVELOPMENTAL STAGE</scope>
</reference>
<reference key="19">
    <citation type="journal article" date="2015" name="Plant J.">
        <title>Repression of jasmonate signaling by a non-TIFY JAZ protein in Arabidopsis.</title>
        <authorList>
            <person name="Thireault C."/>
            <person name="Shyu C."/>
            <person name="Yoshida Y."/>
            <person name="St Aubin B."/>
            <person name="Campos M.L."/>
            <person name="Howe G.A."/>
        </authorList>
    </citation>
    <scope>INTERACTION WITH JAZ13</scope>
</reference>
<reference key="20">
    <citation type="journal article" date="2015" name="Sci. Adv.">
        <title>Structural basis for recognition of diverse transcriptional repressors by the TOPLESS family of corepressors.</title>
        <authorList>
            <person name="Ke J."/>
            <person name="Ma H."/>
            <person name="Gu X."/>
            <person name="Thelen A."/>
            <person name="Brunzelle J.S."/>
            <person name="Li J."/>
            <person name="Xu H.E."/>
            <person name="Melcher K."/>
        </authorList>
    </citation>
    <scope>SUBUNIT</scope>
    <scope>DOMAIN</scope>
</reference>
<reference key="21">
    <citation type="journal article" date="2016" name="PLoS Genet.">
        <title>Microprotein-mediated recruitment of CONSTANS into a TOPLESS trimeric complex represses flowering in Arabidopsis.</title>
        <authorList>
            <person name="Graeff M."/>
            <person name="Straub D."/>
            <person name="Eguen T."/>
            <person name="Dolde U."/>
            <person name="Rodrigues V."/>
            <person name="Brandt R."/>
            <person name="Wenkel S."/>
        </authorList>
    </citation>
    <scope>INTERACTION WITH MIP1A</scope>
    <scope>SUBCELLULAR LOCATION</scope>
</reference>
<reference key="22">
    <citation type="journal article" date="2017" name="Biochem. Biophys. Res. Commun.">
        <title>Adaptor proteins GIR1 and GIR2. II. Interaction with the co-repressor TOPLESS and promotion of histone deacetylation of target chromatin.</title>
        <authorList>
            <person name="Wu R."/>
            <person name="Citovsky V."/>
        </authorList>
    </citation>
    <scope>INTERACTION WITH GIR1 AND GIR2</scope>
    <scope>SUBCELLULAR LOCATION</scope>
</reference>
<reference key="23">
    <citation type="journal article" date="2017" name="Proc. Natl. Acad. Sci. U.S.A.">
        <title>Structure of the Arabidopsis TOPLESS corepressor provides insight into the evolution of transcriptional repression.</title>
        <authorList>
            <person name="Martin-Arevalillo R."/>
            <person name="Nanao M.H."/>
            <person name="Larrieu A."/>
            <person name="Vinos-Poyo T."/>
            <person name="Mast D."/>
            <person name="Galvan-Ampudia C."/>
            <person name="Brunoud G."/>
            <person name="Vernoux T."/>
            <person name="Dumas R."/>
            <person name="Parcy F."/>
        </authorList>
    </citation>
    <scope>X-RAY CRYSTALLOGRAPHY (1.95 ANGSTROMS) OF 3-184</scope>
    <scope>HOMODIMERIZATION</scope>
</reference>
<sequence>MSSLSRELVFLILQFLDEEKFKETVHKLEQESGFFFNMKYFEDEVHNGNWDEVEKYLSGFTKVDDNRYSMKIFFEIRKQKYLEALDKHDRPKAVDILVKDLKVFSTFNEELFKEITQLLTLENFRENEQLSKYGDTKSARAIMLVELKKLIEANPLFRDKLQFPTLRNSRLRTLINQSLNWQHQLCKNPRPNPDIKTLFVDHSCGPPNGARAPSPVNNPLLGGIPKAGGFPPLGAHGPFQPTASPVPTPLAGWMSSPSSVPHPAVSAGAIALGGPSIPAALKHPRTPPTNASLDYPSADSEHVSKRTRPMGISDEVNLGVNMLPMSFSGQAHGHSPAFKAPDDLPKTVARTLSQGSSPMSMDFHPIKQTLLLVGTNVGDIGLWEVGSRERLVQKTFKVWDLSKCSMPLQAALVKEPVVSVNRVIWSPDGSLFGVAYSRHIVQLYSYHGGEDMRQHLEIDAHVGGVNDISFSTPNKQLCVITCGDDKTIKVWDAATGVKRHTFEGHEAPVYSVCPHYKENIQFIFSTALDGKIKAWLYDNMGSRVDYDAPGRWCTTMAYSADGTRLFSCGTSKDGESFIVEWNESEGAVKRTYQGFHKRSLGVVQFDTTKNRYLAAGDDFSIKFWDMDAVQLLTAIDGDGGLQASPRIRFNKEGSLLAVSGNENVIKIMANSDGLRLLHTFENISSESSKPAINSIAAAAAAAATSAGHADRSANVVSIQGMNGDSRNMVDVKPVITEESNDKSKIWKLTEVSEPSQCRSLRLPENLRVAKISRLIFTNSGNAILALASNAIHLLWKWQRNERNATGKATASLPPQQWQPASGILMTNDVAETNPEEAVPCFALSKNDSYVMSASGGKISLFNMMTFKTMATFMPPPPAATFLAFHPQDNNIIAIGMDDSTIQIYNVRVDEVKSKLKGHSKRITGLAFSNVLNVLVSSGADAQLCVWNTDGWEKQRSKVLPLPQGRPNSAPSDTRVQFHQDQAHFLVVHETQLAIYETTKLECMKQWAVRESLAPITHATFSCDSQLVYASFMDATVCVFSSANLRLRCRVNPSAYLPASLSNSNVHPLVIAAHPQEPNMFAVGLSDGGVHIFEPLESEGKWGVAPPAENGSASGAPTAPSVGASASDQPQR</sequence>
<accession>Q94AI7</accession>
<accession>Q9LMQ9</accession>
<comment type="function">
    <text evidence="5 6 7 8 10 14">Transcriptional corepressor. May repress the expression of root-promoting genes in the top half of the embryo to allow proper differentiation of the shoot pole during the transition stage of embryogenesis. Regulates the expression of PLT1 and PLT2. Negative regulator of jasmonate responses. Negative regulator of auxin responses. Negative regulator of multiple floral organ identity genes (PubMed:23034631). Required for ovule development (PubMed:25378179).</text>
</comment>
<comment type="subunit">
    <text evidence="4 6 8 9 10 11 12 13 14 15 16 17 19 20">Tetramer (PubMed:26601214). Homodimer (PubMed:28698367). Interacts (via the LisH domain) with WUS (via the C-terminal domain) (PubMed:16461579). Interacts with NINJA/AFPH2 (PubMed:20360743, PubMed:24416306). Interacts with IAA1; IAA2; IAA3; IAA4; IAA6; IAA8; IAA9; IAA11; IAA13; IAA14; IAA17; IAA18; IAA26; IAA27 and IAA28 (PubMed:18258861). Interacts (via the LisH domain) with IAA12/BDL (via domain I) (PubMed:18258861). Can form a complex with IAA12 and ARF5 (PubMed:20360743). Interacts with AP2 (via EAR motif) and HDA19 (PubMed:23034631). Interacts with TIFY5A/JAZ8 (via EAR motif) (PubMed:22327740). Interacts with SPEAR3/TIE1 (PubMed:23444332). Interacts with SPL (via EAR motif) (PubMed:25378179, PubMed:25527103). Interacts with ZAT2 and ZAT3 (via the EAR motif) (PubMed:24876252). Interacts with JAZ13 (via EAR motif) (PubMed:16461579, PubMed:18258861, PubMed:20360743, PubMed:22327740, PubMed:23034631, PubMed:23444332, PubMed:24416306, PubMed:24876252, PubMed:25378179, PubMed:25527103, PubMed:25846245, PubMed:26601214). Interacts with GIR1 and GIR2 (PubMed:28526412).</text>
</comment>
<comment type="interaction">
    <interactant intactId="EBI-2119299">
        <id>Q94AI7</id>
    </interactant>
    <interactant intactId="EBI-1787005">
        <id>Q9SV55</id>
        <label>AFPH2</label>
    </interactant>
    <organismsDiffer>false</organismsDiffer>
    <experiments>4</experiments>
</comment>
<comment type="interaction">
    <interactant intactId="EBI-2119299">
        <id>Q94AI7</id>
    </interactant>
    <interactant intactId="EBI-1386239">
        <id>F4HPA7</id>
        <label>MED10B</label>
    </interactant>
    <organismsDiffer>false</organismsDiffer>
    <experiments>3</experiments>
</comment>
<comment type="interaction">
    <interactant intactId="EBI-2119299">
        <id>Q94AI7</id>
    </interactant>
    <interactant intactId="EBI-21254755">
        <id>C0LU16</id>
        <label>MED21</label>
    </interactant>
    <organismsDiffer>false</organismsDiffer>
    <experiments>6</experiments>
</comment>
<comment type="interaction">
    <interactant intactId="EBI-2119299">
        <id>Q94AI7</id>
    </interactant>
    <interactant intactId="EBI-4441365">
        <id>Q8L746</id>
        <label>NPR3</label>
    </interactant>
    <organismsDiffer>false</organismsDiffer>
    <experiments>3</experiments>
</comment>
<comment type="interaction">
    <interactant intactId="EBI-2119299">
        <id>Q94AI7</id>
    </interactant>
    <interactant intactId="EBI-2119299">
        <id>Q94AI7</id>
        <label>TPL</label>
    </interactant>
    <organismsDiffer>false</organismsDiffer>
    <experiments>11</experiments>
</comment>
<comment type="interaction">
    <interactant intactId="EBI-2119299">
        <id>Q94AI7</id>
    </interactant>
    <interactant intactId="EBI-2119269">
        <id>Q9SB92</id>
        <label>WUS</label>
    </interactant>
    <organismsDiffer>false</organismsDiffer>
    <experiments>3</experiments>
</comment>
<comment type="subcellular location">
    <subcellularLocation>
        <location evidence="5 6 18 19">Nucleus</location>
    </subcellularLocation>
</comment>
<comment type="tissue specificity">
    <text evidence="4 5 11 14">Expressed in embryo and in extraembryonic tissues (PubMed:16763149). Expressed in inflorescences, flowers, floral meristems, developing anthers and ovules (PubMed:16461579). Detected in the vascular tissues, shoot apical meristem, cotyledons and young leaves (PubMed:23444332). Expressed ubiquitously in the pistils, stamens and pollens (PubMed:25378179).</text>
</comment>
<comment type="developmental stage">
    <text evidence="5 14">Expressed in the embryo proper during early embryogenesis and in the developing vasculature in later stages (PubMed:16763149). Expressed dinamically in the proximal region and in the nucellus during ovule development and mainly observed in the nucellus in mature ovules (PubMed:25378179).</text>
</comment>
<comment type="domain">
    <text evidence="17">The N-terminal TOPLESS domain (TPD) (1-209) binds directly to a 12-amino acid LxLxL EAR motif peptide.</text>
</comment>
<comment type="disruption phenotype">
    <text evidence="5">No visible phenotype, due to the redundancy with the other TPR proteins.</text>
</comment>
<comment type="miscellaneous">
    <text>The tpl-1 gain-of-function allele is suppressed by mutations in the histone acetyltransferase HAG1 gene. The tpl-1 gain-of-function allele suppresses developmental defects in IAA12/BDL mutants.</text>
</comment>
<comment type="sequence caution" evidence="21">
    <conflict type="erroneous gene model prediction">
        <sequence resource="EMBL-CDS" id="AAF82145"/>
    </conflict>
</comment>
<gene>
    <name type="primary">TPL</name>
    <name type="synonym">WSIP1</name>
    <name type="ordered locus">At1g15750</name>
    <name type="ORF">F7H2.9</name>
</gene>
<feature type="chain" id="PRO_0000394731" description="Protein TOPLESS">
    <location>
        <begin position="1"/>
        <end position="1131"/>
    </location>
</feature>
<feature type="domain" description="LisH" evidence="2">
    <location>
        <begin position="4"/>
        <end position="36"/>
    </location>
</feature>
<feature type="domain" description="CTLH" evidence="1">
    <location>
        <begin position="34"/>
        <end position="92"/>
    </location>
</feature>
<feature type="repeat" description="WD 1">
    <location>
        <begin position="353"/>
        <end position="393"/>
    </location>
</feature>
<feature type="repeat" description="WD 2">
    <location>
        <begin position="415"/>
        <end position="454"/>
    </location>
</feature>
<feature type="repeat" description="WD 3">
    <location>
        <begin position="460"/>
        <end position="501"/>
    </location>
</feature>
<feature type="repeat" description="WD 4">
    <location>
        <begin position="504"/>
        <end position="545"/>
    </location>
</feature>
<feature type="repeat" description="WD 5">
    <location>
        <begin position="548"/>
        <end position="591"/>
    </location>
</feature>
<feature type="repeat" description="WD 6">
    <location>
        <begin position="595"/>
        <end position="634"/>
    </location>
</feature>
<feature type="repeat" description="WD 7">
    <location>
        <begin position="639"/>
        <end position="678"/>
    </location>
</feature>
<feature type="repeat" description="WD 8">
    <location>
        <begin position="710"/>
        <end position="756"/>
    </location>
</feature>
<feature type="repeat" description="WD 9">
    <location>
        <begin position="766"/>
        <end position="805"/>
    </location>
</feature>
<feature type="repeat" description="WD 10">
    <location>
        <begin position="833"/>
        <end position="871"/>
    </location>
</feature>
<feature type="repeat" description="WD 11">
    <location>
        <begin position="874"/>
        <end position="914"/>
    </location>
</feature>
<feature type="repeat" description="WD 12">
    <location>
        <begin position="917"/>
        <end position="956"/>
    </location>
</feature>
<feature type="repeat" description="WD 13">
    <location>
        <begin position="967"/>
        <end position="1005"/>
    </location>
</feature>
<feature type="repeat" description="WD 14">
    <location>
        <begin position="1010"/>
        <end position="1049"/>
    </location>
</feature>
<feature type="repeat" description="WD 15">
    <location>
        <begin position="1060"/>
        <end position="1102"/>
    </location>
</feature>
<feature type="region of interest" description="Disordered" evidence="3">
    <location>
        <begin position="286"/>
        <end position="305"/>
    </location>
</feature>
<feature type="region of interest" description="Disordered" evidence="3">
    <location>
        <begin position="1100"/>
        <end position="1131"/>
    </location>
</feature>
<feature type="modified residue" description="Phosphoserine" evidence="22 23 24">
    <location>
        <position position="214"/>
    </location>
</feature>
<feature type="mutagenesis site" description="No effect." evidence="5">
    <original>K</original>
    <variation>M</variation>
    <location>
        <position position="92"/>
    </location>
</feature>
<feature type="mutagenesis site" description="In tpl-1; temperature sensitive gain of function; transforms the shoot pole into a second root pole. No effect on the interaction with IAA12 od HAD19, but loss of interaction with AP2." evidence="5 10">
    <original>N</original>
    <variation>H</variation>
    <location>
        <position position="176"/>
    </location>
</feature>
<feature type="helix" evidence="25">
    <location>
        <begin position="4"/>
        <end position="18"/>
    </location>
</feature>
<feature type="helix" evidence="25">
    <location>
        <begin position="22"/>
        <end position="32"/>
    </location>
</feature>
<feature type="helix" evidence="25">
    <location>
        <begin position="38"/>
        <end position="46"/>
    </location>
</feature>
<feature type="helix" evidence="25">
    <location>
        <begin position="50"/>
        <end position="58"/>
    </location>
</feature>
<feature type="helix" evidence="25">
    <location>
        <begin position="67"/>
        <end position="86"/>
    </location>
</feature>
<feature type="helix" evidence="25">
    <location>
        <begin position="90"/>
        <end position="99"/>
    </location>
</feature>
<feature type="helix" evidence="25">
    <location>
        <begin position="102"/>
        <end position="106"/>
    </location>
</feature>
<feature type="helix" evidence="25">
    <location>
        <begin position="109"/>
        <end position="117"/>
    </location>
</feature>
<feature type="helix" evidence="25">
    <location>
        <begin position="118"/>
        <end position="120"/>
    </location>
</feature>
<feature type="strand" evidence="25">
    <location>
        <begin position="121"/>
        <end position="123"/>
    </location>
</feature>
<feature type="helix" evidence="25">
    <location>
        <begin position="124"/>
        <end position="126"/>
    </location>
</feature>
<feature type="helix" evidence="25">
    <location>
        <begin position="128"/>
        <end position="130"/>
    </location>
</feature>
<feature type="helix" evidence="25">
    <location>
        <begin position="136"/>
        <end position="153"/>
    </location>
</feature>
<feature type="helix" evidence="25">
    <location>
        <begin position="155"/>
        <end position="157"/>
    </location>
</feature>
<feature type="helix" evidence="25">
    <location>
        <begin position="170"/>
        <end position="178"/>
    </location>
</feature>